<comment type="function">
    <text evidence="1">Part of the Tol-Pal system, which plays a role in outer membrane invagination during cell division and is important for maintaining outer membrane integrity.</text>
</comment>
<comment type="subunit">
    <text evidence="1">The Tol-Pal system is composed of five core proteins: the inner membrane proteins TolA, TolQ and TolR, the periplasmic protein TolB and the outer membrane protein Pal. They form a network linking the inner and outer membranes and the peptidoglycan layer.</text>
</comment>
<comment type="subcellular location">
    <subcellularLocation>
        <location evidence="1">Periplasm</location>
    </subcellularLocation>
</comment>
<comment type="similarity">
    <text evidence="1">Belongs to the TolB family.</text>
</comment>
<gene>
    <name evidence="1" type="primary">tolB</name>
    <name type="ordered locus">Rfer_2092</name>
</gene>
<protein>
    <recommendedName>
        <fullName evidence="1">Tol-Pal system protein TolB</fullName>
    </recommendedName>
</protein>
<reference key="1">
    <citation type="submission" date="2006-02" db="EMBL/GenBank/DDBJ databases">
        <title>Complete sequence of chromosome of Rhodoferax ferrireducens DSM 15236.</title>
        <authorList>
            <person name="Copeland A."/>
            <person name="Lucas S."/>
            <person name="Lapidus A."/>
            <person name="Barry K."/>
            <person name="Detter J.C."/>
            <person name="Glavina del Rio T."/>
            <person name="Hammon N."/>
            <person name="Israni S."/>
            <person name="Pitluck S."/>
            <person name="Brettin T."/>
            <person name="Bruce D."/>
            <person name="Han C."/>
            <person name="Tapia R."/>
            <person name="Gilna P."/>
            <person name="Kiss H."/>
            <person name="Schmutz J."/>
            <person name="Larimer F."/>
            <person name="Land M."/>
            <person name="Kyrpides N."/>
            <person name="Ivanova N."/>
            <person name="Richardson P."/>
        </authorList>
    </citation>
    <scope>NUCLEOTIDE SEQUENCE [LARGE SCALE GENOMIC DNA]</scope>
    <source>
        <strain>ATCC BAA-621 / DSM 15236 / T118</strain>
    </source>
</reference>
<feature type="signal peptide" evidence="1">
    <location>
        <begin position="1"/>
        <end position="23"/>
    </location>
</feature>
<feature type="chain" id="PRO_0000259079" description="Tol-Pal system protein TolB" evidence="1">
    <location>
        <begin position="24"/>
        <end position="425"/>
    </location>
</feature>
<dbReference type="EMBL" id="CP000267">
    <property type="protein sequence ID" value="ABD69816.1"/>
    <property type="molecule type" value="Genomic_DNA"/>
</dbReference>
<dbReference type="RefSeq" id="WP_011464384.1">
    <property type="nucleotide sequence ID" value="NC_007908.1"/>
</dbReference>
<dbReference type="SMR" id="Q21WN7"/>
<dbReference type="STRING" id="338969.Rfer_2092"/>
<dbReference type="KEGG" id="rfr:Rfer_2092"/>
<dbReference type="eggNOG" id="COG0823">
    <property type="taxonomic scope" value="Bacteria"/>
</dbReference>
<dbReference type="HOGENOM" id="CLU_047123_0_0_4"/>
<dbReference type="OrthoDB" id="9802240at2"/>
<dbReference type="Proteomes" id="UP000008332">
    <property type="component" value="Chromosome"/>
</dbReference>
<dbReference type="GO" id="GO:0042597">
    <property type="term" value="C:periplasmic space"/>
    <property type="evidence" value="ECO:0007669"/>
    <property type="project" value="UniProtKB-SubCell"/>
</dbReference>
<dbReference type="GO" id="GO:0051301">
    <property type="term" value="P:cell division"/>
    <property type="evidence" value="ECO:0007669"/>
    <property type="project" value="UniProtKB-UniRule"/>
</dbReference>
<dbReference type="GO" id="GO:0017038">
    <property type="term" value="P:protein import"/>
    <property type="evidence" value="ECO:0007669"/>
    <property type="project" value="InterPro"/>
</dbReference>
<dbReference type="Gene3D" id="2.120.10.30">
    <property type="entry name" value="TolB, C-terminal domain"/>
    <property type="match status" value="1"/>
</dbReference>
<dbReference type="Gene3D" id="3.40.50.10070">
    <property type="entry name" value="TolB, N-terminal domain"/>
    <property type="match status" value="1"/>
</dbReference>
<dbReference type="HAMAP" id="MF_00671">
    <property type="entry name" value="TolB"/>
    <property type="match status" value="1"/>
</dbReference>
<dbReference type="InterPro" id="IPR011042">
    <property type="entry name" value="6-blade_b-propeller_TolB-like"/>
</dbReference>
<dbReference type="InterPro" id="IPR011659">
    <property type="entry name" value="PD40"/>
</dbReference>
<dbReference type="InterPro" id="IPR014167">
    <property type="entry name" value="Tol-Pal_TolB"/>
</dbReference>
<dbReference type="InterPro" id="IPR007195">
    <property type="entry name" value="TolB_N"/>
</dbReference>
<dbReference type="NCBIfam" id="TIGR02800">
    <property type="entry name" value="propeller_TolB"/>
    <property type="match status" value="1"/>
</dbReference>
<dbReference type="PANTHER" id="PTHR36842:SF1">
    <property type="entry name" value="PROTEIN TOLB"/>
    <property type="match status" value="1"/>
</dbReference>
<dbReference type="PANTHER" id="PTHR36842">
    <property type="entry name" value="PROTEIN TOLB HOMOLOG"/>
    <property type="match status" value="1"/>
</dbReference>
<dbReference type="Pfam" id="PF07676">
    <property type="entry name" value="PD40"/>
    <property type="match status" value="5"/>
</dbReference>
<dbReference type="Pfam" id="PF04052">
    <property type="entry name" value="TolB_N"/>
    <property type="match status" value="1"/>
</dbReference>
<dbReference type="SUPFAM" id="SSF52964">
    <property type="entry name" value="TolB, N-terminal domain"/>
    <property type="match status" value="1"/>
</dbReference>
<dbReference type="SUPFAM" id="SSF69304">
    <property type="entry name" value="Tricorn protease N-terminal domain"/>
    <property type="match status" value="1"/>
</dbReference>
<organism>
    <name type="scientific">Albidiferax ferrireducens (strain ATCC BAA-621 / DSM 15236 / T118)</name>
    <name type="common">Rhodoferax ferrireducens</name>
    <dbReference type="NCBI Taxonomy" id="338969"/>
    <lineage>
        <taxon>Bacteria</taxon>
        <taxon>Pseudomonadati</taxon>
        <taxon>Pseudomonadota</taxon>
        <taxon>Betaproteobacteria</taxon>
        <taxon>Burkholderiales</taxon>
        <taxon>Comamonadaceae</taxon>
        <taxon>Rhodoferax</taxon>
    </lineage>
</organism>
<sequence>MQMMKKRILLCLLVGMTCLPVLAQFRVEVSGVGLTQLPIAVSAFRGQDSVPQKIAAIVQADLERSGQFRGVDTVGAALDEGTRPDVALWRQKGADSLVTGSVSRLADGRYDVRFRLWDVVRGQDLGGQSYAVTQADLRLSAHRIADFIYEKLTGDKGAFSTRITYVTKAAQRYQLWVADADGENAQSALASPEPIISPAWSPNGSQIAYVSFESRKPVVYTHDVATGKRRLIANFRGSNSAPAWSPDGRTLAVTLSRDGGSQLYAIDAGGGEPRRLAQNSSIDTEPVYAPDGKNIYFVSDRGGAPQIYRMPVTGGGAERVTFTGTYNISPAISPDGRWLAYISRVSGAFKLHVLELASGAVTAITDTTADESPSFAPNSRLIVYATQSQGREALMTATVDGKVKARLAGQNGDIREPGWGPFQKQ</sequence>
<name>TOLB_ALBFT</name>
<accession>Q21WN7</accession>
<proteinExistence type="inferred from homology"/>
<evidence type="ECO:0000255" key="1">
    <source>
        <dbReference type="HAMAP-Rule" id="MF_00671"/>
    </source>
</evidence>
<keyword id="KW-0131">Cell cycle</keyword>
<keyword id="KW-0132">Cell division</keyword>
<keyword id="KW-0574">Periplasm</keyword>
<keyword id="KW-1185">Reference proteome</keyword>
<keyword id="KW-0732">Signal</keyword>